<dbReference type="EC" id="1.1.1.267" evidence="1"/>
<dbReference type="EMBL" id="CP000097">
    <property type="protein sequence ID" value="ABB25657.1"/>
    <property type="molecule type" value="Genomic_DNA"/>
</dbReference>
<dbReference type="RefSeq" id="WP_011359499.1">
    <property type="nucleotide sequence ID" value="NC_007513.1"/>
</dbReference>
<dbReference type="SMR" id="Q3AZ20"/>
<dbReference type="STRING" id="316279.Syncc9902_0689"/>
<dbReference type="KEGG" id="sye:Syncc9902_0689"/>
<dbReference type="eggNOG" id="COG0743">
    <property type="taxonomic scope" value="Bacteria"/>
</dbReference>
<dbReference type="HOGENOM" id="CLU_035714_4_0_3"/>
<dbReference type="OrthoDB" id="9806546at2"/>
<dbReference type="UniPathway" id="UPA00056">
    <property type="reaction ID" value="UER00092"/>
</dbReference>
<dbReference type="Proteomes" id="UP000002712">
    <property type="component" value="Chromosome"/>
</dbReference>
<dbReference type="GO" id="GO:0030604">
    <property type="term" value="F:1-deoxy-D-xylulose-5-phosphate reductoisomerase activity"/>
    <property type="evidence" value="ECO:0007669"/>
    <property type="project" value="UniProtKB-UniRule"/>
</dbReference>
<dbReference type="GO" id="GO:0030145">
    <property type="term" value="F:manganese ion binding"/>
    <property type="evidence" value="ECO:0007669"/>
    <property type="project" value="TreeGrafter"/>
</dbReference>
<dbReference type="GO" id="GO:0070402">
    <property type="term" value="F:NADPH binding"/>
    <property type="evidence" value="ECO:0007669"/>
    <property type="project" value="InterPro"/>
</dbReference>
<dbReference type="GO" id="GO:0051484">
    <property type="term" value="P:isopentenyl diphosphate biosynthetic process, methylerythritol 4-phosphate pathway involved in terpenoid biosynthetic process"/>
    <property type="evidence" value="ECO:0007669"/>
    <property type="project" value="TreeGrafter"/>
</dbReference>
<dbReference type="FunFam" id="3.40.50.720:FF:000045">
    <property type="entry name" value="1-deoxy-D-xylulose 5-phosphate reductoisomerase"/>
    <property type="match status" value="1"/>
</dbReference>
<dbReference type="Gene3D" id="1.10.1740.10">
    <property type="match status" value="1"/>
</dbReference>
<dbReference type="Gene3D" id="3.40.50.720">
    <property type="entry name" value="NAD(P)-binding Rossmann-like Domain"/>
    <property type="match status" value="1"/>
</dbReference>
<dbReference type="HAMAP" id="MF_00183">
    <property type="entry name" value="DXP_reductoisom"/>
    <property type="match status" value="1"/>
</dbReference>
<dbReference type="InterPro" id="IPR003821">
    <property type="entry name" value="DXP_reductoisomerase"/>
</dbReference>
<dbReference type="InterPro" id="IPR013644">
    <property type="entry name" value="DXP_reductoisomerase_C"/>
</dbReference>
<dbReference type="InterPro" id="IPR013512">
    <property type="entry name" value="DXP_reductoisomerase_N"/>
</dbReference>
<dbReference type="InterPro" id="IPR026877">
    <property type="entry name" value="DXPR_C"/>
</dbReference>
<dbReference type="InterPro" id="IPR036169">
    <property type="entry name" value="DXPR_C_sf"/>
</dbReference>
<dbReference type="InterPro" id="IPR036291">
    <property type="entry name" value="NAD(P)-bd_dom_sf"/>
</dbReference>
<dbReference type="NCBIfam" id="TIGR00243">
    <property type="entry name" value="Dxr"/>
    <property type="match status" value="1"/>
</dbReference>
<dbReference type="NCBIfam" id="NF009114">
    <property type="entry name" value="PRK12464.1"/>
    <property type="match status" value="1"/>
</dbReference>
<dbReference type="PANTHER" id="PTHR30525">
    <property type="entry name" value="1-DEOXY-D-XYLULOSE 5-PHOSPHATE REDUCTOISOMERASE"/>
    <property type="match status" value="1"/>
</dbReference>
<dbReference type="PANTHER" id="PTHR30525:SF0">
    <property type="entry name" value="1-DEOXY-D-XYLULOSE 5-PHOSPHATE REDUCTOISOMERASE, CHLOROPLASTIC"/>
    <property type="match status" value="1"/>
</dbReference>
<dbReference type="Pfam" id="PF08436">
    <property type="entry name" value="DXP_redisom_C"/>
    <property type="match status" value="1"/>
</dbReference>
<dbReference type="Pfam" id="PF02670">
    <property type="entry name" value="DXP_reductoisom"/>
    <property type="match status" value="1"/>
</dbReference>
<dbReference type="Pfam" id="PF13288">
    <property type="entry name" value="DXPR_C"/>
    <property type="match status" value="1"/>
</dbReference>
<dbReference type="PIRSF" id="PIRSF006205">
    <property type="entry name" value="Dxp_reductismrs"/>
    <property type="match status" value="1"/>
</dbReference>
<dbReference type="SUPFAM" id="SSF69055">
    <property type="entry name" value="1-deoxy-D-xylulose-5-phosphate reductoisomerase, C-terminal domain"/>
    <property type="match status" value="1"/>
</dbReference>
<dbReference type="SUPFAM" id="SSF55347">
    <property type="entry name" value="Glyceraldehyde-3-phosphate dehydrogenase-like, C-terminal domain"/>
    <property type="match status" value="1"/>
</dbReference>
<dbReference type="SUPFAM" id="SSF51735">
    <property type="entry name" value="NAD(P)-binding Rossmann-fold domains"/>
    <property type="match status" value="1"/>
</dbReference>
<gene>
    <name evidence="1" type="primary">dxr</name>
    <name type="ordered locus">Syncc9902_0689</name>
</gene>
<feature type="chain" id="PRO_1000098518" description="1-deoxy-D-xylulose 5-phosphate reductoisomerase">
    <location>
        <begin position="1"/>
        <end position="417"/>
    </location>
</feature>
<feature type="binding site" evidence="1">
    <location>
        <position position="10"/>
    </location>
    <ligand>
        <name>NADPH</name>
        <dbReference type="ChEBI" id="CHEBI:57783"/>
    </ligand>
</feature>
<feature type="binding site" evidence="1">
    <location>
        <position position="11"/>
    </location>
    <ligand>
        <name>NADPH</name>
        <dbReference type="ChEBI" id="CHEBI:57783"/>
    </ligand>
</feature>
<feature type="binding site" evidence="1">
    <location>
        <position position="12"/>
    </location>
    <ligand>
        <name>NADPH</name>
        <dbReference type="ChEBI" id="CHEBI:57783"/>
    </ligand>
</feature>
<feature type="binding site" evidence="1">
    <location>
        <position position="13"/>
    </location>
    <ligand>
        <name>NADPH</name>
        <dbReference type="ChEBI" id="CHEBI:57783"/>
    </ligand>
</feature>
<feature type="binding site" evidence="1">
    <location>
        <position position="36"/>
    </location>
    <ligand>
        <name>NADPH</name>
        <dbReference type="ChEBI" id="CHEBI:57783"/>
    </ligand>
</feature>
<feature type="binding site" evidence="1">
    <location>
        <position position="37"/>
    </location>
    <ligand>
        <name>NADPH</name>
        <dbReference type="ChEBI" id="CHEBI:57783"/>
    </ligand>
</feature>
<feature type="binding site" evidence="1">
    <location>
        <position position="38"/>
    </location>
    <ligand>
        <name>NADPH</name>
        <dbReference type="ChEBI" id="CHEBI:57783"/>
    </ligand>
</feature>
<feature type="binding site" evidence="1">
    <location>
        <position position="130"/>
    </location>
    <ligand>
        <name>NADPH</name>
        <dbReference type="ChEBI" id="CHEBI:57783"/>
    </ligand>
</feature>
<feature type="binding site" evidence="1">
    <location>
        <position position="131"/>
    </location>
    <ligand>
        <name>1-deoxy-D-xylulose 5-phosphate</name>
        <dbReference type="ChEBI" id="CHEBI:57792"/>
    </ligand>
</feature>
<feature type="binding site" evidence="1">
    <location>
        <position position="132"/>
    </location>
    <ligand>
        <name>NADPH</name>
        <dbReference type="ChEBI" id="CHEBI:57783"/>
    </ligand>
</feature>
<feature type="binding site" evidence="1">
    <location>
        <position position="156"/>
    </location>
    <ligand>
        <name>Mn(2+)</name>
        <dbReference type="ChEBI" id="CHEBI:29035"/>
    </ligand>
</feature>
<feature type="binding site" evidence="1">
    <location>
        <position position="157"/>
    </location>
    <ligand>
        <name>1-deoxy-D-xylulose 5-phosphate</name>
        <dbReference type="ChEBI" id="CHEBI:57792"/>
    </ligand>
</feature>
<feature type="binding site" evidence="1">
    <location>
        <position position="158"/>
    </location>
    <ligand>
        <name>1-deoxy-D-xylulose 5-phosphate</name>
        <dbReference type="ChEBI" id="CHEBI:57792"/>
    </ligand>
</feature>
<feature type="binding site" evidence="1">
    <location>
        <position position="158"/>
    </location>
    <ligand>
        <name>Mn(2+)</name>
        <dbReference type="ChEBI" id="CHEBI:29035"/>
    </ligand>
</feature>
<feature type="binding site" evidence="1">
    <location>
        <position position="194"/>
    </location>
    <ligand>
        <name>1-deoxy-D-xylulose 5-phosphate</name>
        <dbReference type="ChEBI" id="CHEBI:57792"/>
    </ligand>
</feature>
<feature type="binding site" evidence="1">
    <location>
        <position position="217"/>
    </location>
    <ligand>
        <name>1-deoxy-D-xylulose 5-phosphate</name>
        <dbReference type="ChEBI" id="CHEBI:57792"/>
    </ligand>
</feature>
<feature type="binding site" evidence="1">
    <location>
        <position position="223"/>
    </location>
    <ligand>
        <name>NADPH</name>
        <dbReference type="ChEBI" id="CHEBI:57783"/>
    </ligand>
</feature>
<feature type="binding site" evidence="1">
    <location>
        <position position="230"/>
    </location>
    <ligand>
        <name>1-deoxy-D-xylulose 5-phosphate</name>
        <dbReference type="ChEBI" id="CHEBI:57792"/>
    </ligand>
</feature>
<feature type="binding site" evidence="1">
    <location>
        <position position="235"/>
    </location>
    <ligand>
        <name>1-deoxy-D-xylulose 5-phosphate</name>
        <dbReference type="ChEBI" id="CHEBI:57792"/>
    </ligand>
</feature>
<feature type="binding site" evidence="1">
    <location>
        <position position="236"/>
    </location>
    <ligand>
        <name>1-deoxy-D-xylulose 5-phosphate</name>
        <dbReference type="ChEBI" id="CHEBI:57792"/>
    </ligand>
</feature>
<feature type="binding site" evidence="1">
    <location>
        <position position="239"/>
    </location>
    <ligand>
        <name>1-deoxy-D-xylulose 5-phosphate</name>
        <dbReference type="ChEBI" id="CHEBI:57792"/>
    </ligand>
</feature>
<feature type="binding site" evidence="1">
    <location>
        <position position="239"/>
    </location>
    <ligand>
        <name>Mn(2+)</name>
        <dbReference type="ChEBI" id="CHEBI:29035"/>
    </ligand>
</feature>
<sequence length="417" mass="45010">MKAISVLGSTGSIGTQTLQIVDDFPDQFRVVALTAGRNLALLVEQIQRHQPELVALADEALLPELKQRLEALDPSDRPAQCPEMVGGPDGLEVAASWGSAELVVTGIVGCAGLLPTLAAVRAGKDLALANKETLIAAGPVVLPELKKSGSRLLPADSEHSAIFQCLQGTPWADTARLSTGVPTPGLRRIQLTASGGAFRDWNAADLEKATVADATSHPNWSMGRKITVDSASLMNKGLEVIEAHYLFGLDYDHIEIVIHPQSIIHSMVEMADSSVLAQLGWPDMKLPILYCLSWPSRLETPWRRLDLTEVGQLSFRAPDPNKYPCMELAYAAGRAGGTMPAVMNAANEEAVAQFLEERIHFLDIPEVIEAACERHKPDLMAHPQLDDVLEVDQWARTAVREQVSRGTTRIPGPAVAA</sequence>
<comment type="function">
    <text evidence="1">Catalyzes the NADPH-dependent rearrangement and reduction of 1-deoxy-D-xylulose-5-phosphate (DXP) to 2-C-methyl-D-erythritol 4-phosphate (MEP).</text>
</comment>
<comment type="catalytic activity">
    <reaction evidence="1">
        <text>2-C-methyl-D-erythritol 4-phosphate + NADP(+) = 1-deoxy-D-xylulose 5-phosphate + NADPH + H(+)</text>
        <dbReference type="Rhea" id="RHEA:13717"/>
        <dbReference type="ChEBI" id="CHEBI:15378"/>
        <dbReference type="ChEBI" id="CHEBI:57783"/>
        <dbReference type="ChEBI" id="CHEBI:57792"/>
        <dbReference type="ChEBI" id="CHEBI:58262"/>
        <dbReference type="ChEBI" id="CHEBI:58349"/>
        <dbReference type="EC" id="1.1.1.267"/>
    </reaction>
    <physiologicalReaction direction="right-to-left" evidence="1">
        <dbReference type="Rhea" id="RHEA:13719"/>
    </physiologicalReaction>
</comment>
<comment type="cofactor">
    <cofactor evidence="1">
        <name>Mg(2+)</name>
        <dbReference type="ChEBI" id="CHEBI:18420"/>
    </cofactor>
    <cofactor evidence="1">
        <name>Mn(2+)</name>
        <dbReference type="ChEBI" id="CHEBI:29035"/>
    </cofactor>
</comment>
<comment type="pathway">
    <text evidence="1">Isoprenoid biosynthesis; isopentenyl diphosphate biosynthesis via DXP pathway; isopentenyl diphosphate from 1-deoxy-D-xylulose 5-phosphate: step 1/6.</text>
</comment>
<comment type="similarity">
    <text evidence="1">Belongs to the DXR family.</text>
</comment>
<accession>Q3AZ20</accession>
<reference key="1">
    <citation type="submission" date="2005-08" db="EMBL/GenBank/DDBJ databases">
        <title>Complete sequence of Synechococcus sp. CC9902.</title>
        <authorList>
            <person name="Copeland A."/>
            <person name="Lucas S."/>
            <person name="Lapidus A."/>
            <person name="Barry K."/>
            <person name="Detter J.C."/>
            <person name="Glavina T."/>
            <person name="Hammon N."/>
            <person name="Israni S."/>
            <person name="Pitluck S."/>
            <person name="Martinez M."/>
            <person name="Schmutz J."/>
            <person name="Larimer F."/>
            <person name="Land M."/>
            <person name="Kyrpides N."/>
            <person name="Ivanova N."/>
            <person name="Richardson P."/>
        </authorList>
    </citation>
    <scope>NUCLEOTIDE SEQUENCE [LARGE SCALE GENOMIC DNA]</scope>
    <source>
        <strain>CC9902</strain>
    </source>
</reference>
<proteinExistence type="inferred from homology"/>
<organism>
    <name type="scientific">Synechococcus sp. (strain CC9902)</name>
    <dbReference type="NCBI Taxonomy" id="316279"/>
    <lineage>
        <taxon>Bacteria</taxon>
        <taxon>Bacillati</taxon>
        <taxon>Cyanobacteriota</taxon>
        <taxon>Cyanophyceae</taxon>
        <taxon>Synechococcales</taxon>
        <taxon>Synechococcaceae</taxon>
        <taxon>Synechococcus</taxon>
    </lineage>
</organism>
<evidence type="ECO:0000255" key="1">
    <source>
        <dbReference type="HAMAP-Rule" id="MF_00183"/>
    </source>
</evidence>
<name>DXR_SYNS9</name>
<keyword id="KW-0414">Isoprene biosynthesis</keyword>
<keyword id="KW-0464">Manganese</keyword>
<keyword id="KW-0479">Metal-binding</keyword>
<keyword id="KW-0521">NADP</keyword>
<keyword id="KW-0560">Oxidoreductase</keyword>
<keyword id="KW-1185">Reference proteome</keyword>
<protein>
    <recommendedName>
        <fullName evidence="1">1-deoxy-D-xylulose 5-phosphate reductoisomerase</fullName>
        <shortName evidence="1">DXP reductoisomerase</shortName>
        <ecNumber evidence="1">1.1.1.267</ecNumber>
    </recommendedName>
    <alternativeName>
        <fullName evidence="1">1-deoxyxylulose-5-phosphate reductoisomerase</fullName>
    </alternativeName>
    <alternativeName>
        <fullName evidence="1">2-C-methyl-D-erythritol 4-phosphate synthase</fullName>
    </alternativeName>
</protein>